<evidence type="ECO:0000250" key="1">
    <source>
        <dbReference type="UniProtKB" id="Q9BY41"/>
    </source>
</evidence>
<evidence type="ECO:0000269" key="2">
    <source>
    </source>
</evidence>
<evidence type="ECO:0000303" key="3">
    <source>
    </source>
</evidence>
<evidence type="ECO:0000305" key="4"/>
<keyword id="KW-0025">Alternative splicing</keyword>
<keyword id="KW-0156">Chromatin regulator</keyword>
<keyword id="KW-0158">Chromosome</keyword>
<keyword id="KW-0963">Cytoplasm</keyword>
<keyword id="KW-0903">Direct protein sequencing</keyword>
<keyword id="KW-0378">Hydrolase</keyword>
<keyword id="KW-0479">Metal-binding</keyword>
<keyword id="KW-0539">Nucleus</keyword>
<keyword id="KW-0597">Phosphoprotein</keyword>
<keyword id="KW-1185">Reference proteome</keyword>
<keyword id="KW-0678">Repressor</keyword>
<keyword id="KW-0804">Transcription</keyword>
<keyword id="KW-0805">Transcription regulation</keyword>
<accession>Q8VH37</accession>
<accession>Q3V270</accession>
<accession>Q9D0K6</accession>
<gene>
    <name type="primary">Hdac8</name>
</gene>
<proteinExistence type="evidence at protein level"/>
<comment type="function">
    <text evidence="1">Histone deacetylase that catalyzes the deacetylation of lysine residues on the N-terminal part of the core histones (H2A, H2B, H3 and H4). Histone deacetylation gives a tag for epigenetic repression and plays an important role in transcriptional regulation, cell cycle progression and developmental events. Histone deacetylases act via the formation of large multiprotein complexes. Also involved in the deacetylation of cohesin complex protein SMC3 regulating release of cohesin complexes from chromatin. May play a role in smooth muscle cell contractility. In addition to protein deacetylase activity, also has protein-lysine deacylase activity: acts as a protein decrotonylase by mediating decrotonylation ((2E)-butenoyl) of histones.</text>
</comment>
<comment type="catalytic activity">
    <reaction evidence="1">
        <text>N(6)-acetyl-L-lysyl-[histone] + H2O = L-lysyl-[histone] + acetate</text>
        <dbReference type="Rhea" id="RHEA:58196"/>
        <dbReference type="Rhea" id="RHEA-COMP:9845"/>
        <dbReference type="Rhea" id="RHEA-COMP:11338"/>
        <dbReference type="ChEBI" id="CHEBI:15377"/>
        <dbReference type="ChEBI" id="CHEBI:29969"/>
        <dbReference type="ChEBI" id="CHEBI:30089"/>
        <dbReference type="ChEBI" id="CHEBI:61930"/>
        <dbReference type="EC" id="3.5.1.98"/>
    </reaction>
    <physiologicalReaction direction="left-to-right" evidence="1">
        <dbReference type="Rhea" id="RHEA:58197"/>
    </physiologicalReaction>
</comment>
<comment type="catalytic activity">
    <reaction evidence="1">
        <text>N(6)-acetyl-L-lysyl-[protein] + H2O = L-lysyl-[protein] + acetate</text>
        <dbReference type="Rhea" id="RHEA:58108"/>
        <dbReference type="Rhea" id="RHEA-COMP:9752"/>
        <dbReference type="Rhea" id="RHEA-COMP:10731"/>
        <dbReference type="ChEBI" id="CHEBI:15377"/>
        <dbReference type="ChEBI" id="CHEBI:29969"/>
        <dbReference type="ChEBI" id="CHEBI:30089"/>
        <dbReference type="ChEBI" id="CHEBI:61930"/>
    </reaction>
    <physiologicalReaction direction="left-to-right" evidence="1">
        <dbReference type="Rhea" id="RHEA:58109"/>
    </physiologicalReaction>
</comment>
<comment type="catalytic activity">
    <reaction evidence="1">
        <text>N(6)-(2E)-butenoyl-L-lysyl-[protein] + H2O = (2E)-2-butenoate + L-lysyl-[protein]</text>
        <dbReference type="Rhea" id="RHEA:69172"/>
        <dbReference type="Rhea" id="RHEA-COMP:9752"/>
        <dbReference type="Rhea" id="RHEA-COMP:13707"/>
        <dbReference type="ChEBI" id="CHEBI:15377"/>
        <dbReference type="ChEBI" id="CHEBI:29969"/>
        <dbReference type="ChEBI" id="CHEBI:35899"/>
        <dbReference type="ChEBI" id="CHEBI:137954"/>
    </reaction>
    <physiologicalReaction direction="left-to-right" evidence="1">
        <dbReference type="Rhea" id="RHEA:69173"/>
    </physiologicalReaction>
</comment>
<comment type="cofactor">
    <cofactor evidence="1">
        <name>a divalent metal cation</name>
        <dbReference type="ChEBI" id="CHEBI:60240"/>
    </cofactor>
    <text evidence="1">Binds 1 divalent metal cation per subunit.</text>
</comment>
<comment type="activity regulation">
    <text evidence="1">Its activity is inhibited by trichostatin A (TSA) and butyrate, 2 well known histone deacetylase inhibitors. histone deacetylase inhibitor.</text>
</comment>
<comment type="subunit">
    <text evidence="1 2">Interacts with CBFA2T3 (PubMed:11533236). Interacts with phosphorylated SMG5/EST1B; this interaction protects SMG5 from ubiquitin-mediated degradation (By similarity). Associates with alpha-SMA (smooth muscle alpha-actin) (By similarity).</text>
</comment>
<comment type="subcellular location">
    <subcellularLocation>
        <location evidence="1">Nucleus</location>
    </subcellularLocation>
    <subcellularLocation>
        <location evidence="1">Chromosome</location>
    </subcellularLocation>
    <subcellularLocation>
        <location evidence="1">Cytoplasm</location>
    </subcellularLocation>
    <text evidence="1">Excluded from the nucleoli. Found in the cytoplasm of cells showing smooth muscle differentiation.</text>
</comment>
<comment type="alternative products">
    <event type="alternative splicing"/>
    <isoform>
        <id>Q8VH37-1</id>
        <name>1</name>
        <sequence type="displayed"/>
    </isoform>
    <isoform>
        <id>Q8VH37-2</id>
        <name>2</name>
        <sequence type="described" ref="VSP_007178 VSP_007179"/>
    </isoform>
</comment>
<comment type="PTM">
    <text evidence="1">Phosphorylated by PKA on serine 39. Phosphorylation reduces deacetylase activity observed preferentially on histones H3 and H4.</text>
</comment>
<comment type="similarity">
    <text evidence="4">Belongs to the histone deacetylase family. HD type 1 subfamily.</text>
</comment>
<protein>
    <recommendedName>
        <fullName>Histone deacetylase 8</fullName>
        <shortName>HD8</shortName>
        <ecNumber evidence="1">3.5.1.98</ecNumber>
    </recommendedName>
    <alternativeName>
        <fullName evidence="4">Protein deacetylase HDAC8</fullName>
        <ecNumber evidence="1">3.5.1.-</ecNumber>
    </alternativeName>
    <alternativeName>
        <fullName evidence="4">Protein decrotonylase HDAC8</fullName>
        <ecNumber evidence="1">3.5.1.-</ecNumber>
    </alternativeName>
</protein>
<name>HDAC8_MOUSE</name>
<feature type="chain" id="PRO_0000114709" description="Histone deacetylase 8">
    <location>
        <begin position="1"/>
        <end position="377"/>
    </location>
</feature>
<feature type="region of interest" description="Histone deacetylase">
    <location>
        <begin position="14"/>
        <end position="324"/>
    </location>
</feature>
<feature type="active site" description="Proton acceptor" evidence="1">
    <location>
        <position position="143"/>
    </location>
</feature>
<feature type="binding site" evidence="1">
    <location>
        <position position="101"/>
    </location>
    <ligand>
        <name>substrate</name>
    </ligand>
</feature>
<feature type="binding site" evidence="1">
    <location>
        <position position="151"/>
    </location>
    <ligand>
        <name>substrate</name>
    </ligand>
</feature>
<feature type="binding site" evidence="1">
    <location>
        <position position="178"/>
    </location>
    <ligand>
        <name>a divalent metal cation</name>
        <dbReference type="ChEBI" id="CHEBI:60240"/>
    </ligand>
</feature>
<feature type="binding site" evidence="1">
    <location>
        <position position="180"/>
    </location>
    <ligand>
        <name>a divalent metal cation</name>
        <dbReference type="ChEBI" id="CHEBI:60240"/>
    </ligand>
</feature>
<feature type="binding site" evidence="1">
    <location>
        <position position="267"/>
    </location>
    <ligand>
        <name>a divalent metal cation</name>
        <dbReference type="ChEBI" id="CHEBI:60240"/>
    </ligand>
</feature>
<feature type="binding site" evidence="1">
    <location>
        <position position="306"/>
    </location>
    <ligand>
        <name>substrate</name>
    </ligand>
</feature>
<feature type="modified residue" description="Phosphoserine" evidence="1">
    <location>
        <position position="39"/>
    </location>
</feature>
<feature type="splice variant" id="VSP_007178" description="In isoform 2." evidence="3">
    <original>SVLKEVYQ</original>
    <variation>RACFTRTP</variation>
    <location>
        <begin position="246"/>
        <end position="253"/>
    </location>
</feature>
<feature type="splice variant" id="VSP_007179" description="In isoform 2." evidence="3">
    <location>
        <begin position="254"/>
        <end position="377"/>
    </location>
</feature>
<feature type="sequence conflict" description="In Ref. 3; AAL47569." evidence="4" ref="3">
    <original>E</original>
    <variation>D</variation>
    <location>
        <position position="88"/>
    </location>
</feature>
<feature type="sequence conflict" description="In Ref. 3; AAL47569." evidence="4" ref="3">
    <original>G</original>
    <variation>A</variation>
    <location>
        <position position="118"/>
    </location>
</feature>
<feature type="sequence conflict" description="In Ref. 3; AAL47569." evidence="4" ref="3">
    <original>K</original>
    <variation>M</variation>
    <location>
        <position position="130"/>
    </location>
</feature>
<feature type="sequence conflict" description="In Ref. 3; AAL47569." evidence="4" ref="3">
    <original>D</original>
    <variation>E</variation>
    <location>
        <position position="170"/>
    </location>
</feature>
<feature type="sequence conflict" description="In Ref. 3; AAL47569." evidence="4" ref="3">
    <original>D</original>
    <variation>V</variation>
    <location>
        <position position="187"/>
    </location>
</feature>
<dbReference type="EC" id="3.5.1.98" evidence="1"/>
<dbReference type="EC" id="3.5.1.-" evidence="1"/>
<dbReference type="EMBL" id="AK011332">
    <property type="protein sequence ID" value="BAB27550.1"/>
    <property type="molecule type" value="mRNA"/>
</dbReference>
<dbReference type="EMBL" id="AK131998">
    <property type="protein sequence ID" value="BAE20928.1"/>
    <property type="molecule type" value="mRNA"/>
</dbReference>
<dbReference type="EMBL" id="BC061257">
    <property type="protein sequence ID" value="AAH61257.1"/>
    <property type="molecule type" value="mRNA"/>
</dbReference>
<dbReference type="EMBL" id="AK034511">
    <property type="protein sequence ID" value="BAC28737.1"/>
    <property type="molecule type" value="mRNA"/>
</dbReference>
<dbReference type="EMBL" id="AK041965">
    <property type="protein sequence ID" value="BAC31116.1"/>
    <property type="molecule type" value="mRNA"/>
</dbReference>
<dbReference type="EMBL" id="AY066003">
    <property type="protein sequence ID" value="AAL47569.1"/>
    <property type="molecule type" value="mRNA"/>
</dbReference>
<dbReference type="CCDS" id="CCDS41084.1">
    <molecule id="Q8VH37-1"/>
</dbReference>
<dbReference type="RefSeq" id="NP_001300671.1">
    <molecule id="Q8VH37-2"/>
    <property type="nucleotide sequence ID" value="NM_001313742.1"/>
</dbReference>
<dbReference type="RefSeq" id="NP_081658.1">
    <molecule id="Q8VH37-1"/>
    <property type="nucleotide sequence ID" value="NM_027382.4"/>
</dbReference>
<dbReference type="SMR" id="Q8VH37"/>
<dbReference type="BioGRID" id="213982">
    <property type="interactions" value="2"/>
</dbReference>
<dbReference type="CORUM" id="Q8VH37"/>
<dbReference type="FunCoup" id="Q8VH37">
    <property type="interactions" value="1939"/>
</dbReference>
<dbReference type="IntAct" id="Q8VH37">
    <property type="interactions" value="2"/>
</dbReference>
<dbReference type="MINT" id="Q8VH37"/>
<dbReference type="STRING" id="10090.ENSMUSP00000085226"/>
<dbReference type="BindingDB" id="Q8VH37"/>
<dbReference type="ChEMBL" id="CHEMBL2347"/>
<dbReference type="GlyGen" id="Q8VH37">
    <property type="glycosylation" value="1 site, 1 N-linked glycan (1 site)"/>
</dbReference>
<dbReference type="PhosphoSitePlus" id="Q8VH37"/>
<dbReference type="PaxDb" id="10090-ENSMUSP00000085226"/>
<dbReference type="PeptideAtlas" id="Q8VH37"/>
<dbReference type="ProteomicsDB" id="271498">
    <molecule id="Q8VH37-1"/>
</dbReference>
<dbReference type="ProteomicsDB" id="271499">
    <molecule id="Q8VH37-2"/>
</dbReference>
<dbReference type="Pumba" id="Q8VH37"/>
<dbReference type="DNASU" id="70315"/>
<dbReference type="Ensembl" id="ENSMUST00000087916.11">
    <molecule id="Q8VH37-1"/>
    <property type="protein sequence ID" value="ENSMUSP00000085226.5"/>
    <property type="gene ID" value="ENSMUSG00000067567.13"/>
</dbReference>
<dbReference type="GeneID" id="70315"/>
<dbReference type="KEGG" id="mmu:70315"/>
<dbReference type="UCSC" id="uc009typ.1">
    <molecule id="Q8VH37-1"/>
    <property type="organism name" value="mouse"/>
</dbReference>
<dbReference type="UCSC" id="uc009tyq.1">
    <molecule id="Q8VH37-2"/>
    <property type="organism name" value="mouse"/>
</dbReference>
<dbReference type="AGR" id="MGI:1917565"/>
<dbReference type="CTD" id="55869"/>
<dbReference type="MGI" id="MGI:1917565">
    <property type="gene designation" value="Hdac8"/>
</dbReference>
<dbReference type="VEuPathDB" id="HostDB:ENSMUSG00000067567"/>
<dbReference type="eggNOG" id="KOG1342">
    <property type="taxonomic scope" value="Eukaryota"/>
</dbReference>
<dbReference type="GeneTree" id="ENSGT00940000157843"/>
<dbReference type="HOGENOM" id="CLU_007727_7_6_1"/>
<dbReference type="InParanoid" id="Q8VH37"/>
<dbReference type="OMA" id="CFWHSTG"/>
<dbReference type="OrthoDB" id="73273at2759"/>
<dbReference type="PhylomeDB" id="Q8VH37"/>
<dbReference type="TreeFam" id="TF106175"/>
<dbReference type="Reactome" id="R-MMU-2467813">
    <property type="pathway name" value="Separation of Sister Chromatids"/>
</dbReference>
<dbReference type="Reactome" id="R-MMU-2500257">
    <property type="pathway name" value="Resolution of Sister Chromatid Cohesion"/>
</dbReference>
<dbReference type="Reactome" id="R-MMU-3214815">
    <property type="pathway name" value="HDACs deacetylate histones"/>
</dbReference>
<dbReference type="Reactome" id="R-MMU-350054">
    <property type="pathway name" value="Notch-HLH transcription pathway"/>
</dbReference>
<dbReference type="BioGRID-ORCS" id="70315">
    <property type="hits" value="4 hits in 80 CRISPR screens"/>
</dbReference>
<dbReference type="ChiTaRS" id="Hdac8">
    <property type="organism name" value="mouse"/>
</dbReference>
<dbReference type="PRO" id="PR:Q8VH37"/>
<dbReference type="Proteomes" id="UP000000589">
    <property type="component" value="Chromosome X"/>
</dbReference>
<dbReference type="RNAct" id="Q8VH37">
    <property type="molecule type" value="protein"/>
</dbReference>
<dbReference type="Bgee" id="ENSMUSG00000067567">
    <property type="expression patterns" value="Expressed in wall of esophagus and 173 other cell types or tissues"/>
</dbReference>
<dbReference type="ExpressionAtlas" id="Q8VH37">
    <property type="expression patterns" value="baseline and differential"/>
</dbReference>
<dbReference type="GO" id="GO:0005694">
    <property type="term" value="C:chromosome"/>
    <property type="evidence" value="ECO:0007669"/>
    <property type="project" value="UniProtKB-SubCell"/>
</dbReference>
<dbReference type="GO" id="GO:0005737">
    <property type="term" value="C:cytoplasm"/>
    <property type="evidence" value="ECO:0000304"/>
    <property type="project" value="UniProtKB"/>
</dbReference>
<dbReference type="GO" id="GO:0000118">
    <property type="term" value="C:histone deacetylase complex"/>
    <property type="evidence" value="ECO:0000304"/>
    <property type="project" value="UniProtKB"/>
</dbReference>
<dbReference type="GO" id="GO:0005634">
    <property type="term" value="C:nucleus"/>
    <property type="evidence" value="ECO:0000304"/>
    <property type="project" value="UniProtKB"/>
</dbReference>
<dbReference type="GO" id="GO:0140297">
    <property type="term" value="F:DNA-binding transcription factor binding"/>
    <property type="evidence" value="ECO:0000304"/>
    <property type="project" value="UniProtKB"/>
</dbReference>
<dbReference type="GO" id="GO:0004407">
    <property type="term" value="F:histone deacetylase activity"/>
    <property type="evidence" value="ECO:0000250"/>
    <property type="project" value="UniProtKB"/>
</dbReference>
<dbReference type="GO" id="GO:0141221">
    <property type="term" value="F:histone deacetylase activity, hydrolytic mechanism"/>
    <property type="evidence" value="ECO:0007669"/>
    <property type="project" value="UniProtKB-EC"/>
</dbReference>
<dbReference type="GO" id="GO:0160009">
    <property type="term" value="F:histone decrotonylase activity"/>
    <property type="evidence" value="ECO:0000250"/>
    <property type="project" value="UniProtKB"/>
</dbReference>
<dbReference type="GO" id="GO:0030544">
    <property type="term" value="F:Hsp70 protein binding"/>
    <property type="evidence" value="ECO:0007669"/>
    <property type="project" value="Ensembl"/>
</dbReference>
<dbReference type="GO" id="GO:0051879">
    <property type="term" value="F:Hsp90 protein binding"/>
    <property type="evidence" value="ECO:0007669"/>
    <property type="project" value="Ensembl"/>
</dbReference>
<dbReference type="GO" id="GO:0046872">
    <property type="term" value="F:metal ion binding"/>
    <property type="evidence" value="ECO:0007669"/>
    <property type="project" value="UniProtKB-KW"/>
</dbReference>
<dbReference type="GO" id="GO:0006325">
    <property type="term" value="P:chromatin organization"/>
    <property type="evidence" value="ECO:0000304"/>
    <property type="project" value="UniProtKB"/>
</dbReference>
<dbReference type="GO" id="GO:0007064">
    <property type="term" value="P:mitotic sister chromatid cohesion"/>
    <property type="evidence" value="ECO:0000250"/>
    <property type="project" value="UniProtKB"/>
</dbReference>
<dbReference type="GO" id="GO:0031397">
    <property type="term" value="P:negative regulation of protein ubiquitination"/>
    <property type="evidence" value="ECO:0007669"/>
    <property type="project" value="Ensembl"/>
</dbReference>
<dbReference type="GO" id="GO:0031647">
    <property type="term" value="P:regulation of protein stability"/>
    <property type="evidence" value="ECO:0007669"/>
    <property type="project" value="Ensembl"/>
</dbReference>
<dbReference type="GO" id="GO:0032204">
    <property type="term" value="P:regulation of telomere maintenance"/>
    <property type="evidence" value="ECO:0007669"/>
    <property type="project" value="Ensembl"/>
</dbReference>
<dbReference type="CDD" id="cd10000">
    <property type="entry name" value="HDAC8"/>
    <property type="match status" value="1"/>
</dbReference>
<dbReference type="FunFam" id="3.40.800.20:FF:000006">
    <property type="entry name" value="Histone deacetylase 8"/>
    <property type="match status" value="1"/>
</dbReference>
<dbReference type="Gene3D" id="3.40.800.20">
    <property type="entry name" value="Histone deacetylase domain"/>
    <property type="match status" value="1"/>
</dbReference>
<dbReference type="InterPro" id="IPR050284">
    <property type="entry name" value="HDAC_PDAC"/>
</dbReference>
<dbReference type="InterPro" id="IPR000286">
    <property type="entry name" value="His_deacetylse"/>
</dbReference>
<dbReference type="InterPro" id="IPR003084">
    <property type="entry name" value="His_deacetylse_1"/>
</dbReference>
<dbReference type="InterPro" id="IPR023801">
    <property type="entry name" value="His_deacetylse_dom"/>
</dbReference>
<dbReference type="InterPro" id="IPR037138">
    <property type="entry name" value="His_deacetylse_dom_sf"/>
</dbReference>
<dbReference type="InterPro" id="IPR023696">
    <property type="entry name" value="Ureohydrolase_dom_sf"/>
</dbReference>
<dbReference type="PANTHER" id="PTHR10625:SF14">
    <property type="entry name" value="HISTONE DEACETYLASE 8"/>
    <property type="match status" value="1"/>
</dbReference>
<dbReference type="PANTHER" id="PTHR10625">
    <property type="entry name" value="HISTONE DEACETYLASE HDAC1-RELATED"/>
    <property type="match status" value="1"/>
</dbReference>
<dbReference type="Pfam" id="PF00850">
    <property type="entry name" value="Hist_deacetyl"/>
    <property type="match status" value="1"/>
</dbReference>
<dbReference type="PIRSF" id="PIRSF037913">
    <property type="entry name" value="His_deacetylse_1"/>
    <property type="match status" value="1"/>
</dbReference>
<dbReference type="PRINTS" id="PR01270">
    <property type="entry name" value="HDASUPER"/>
</dbReference>
<dbReference type="PRINTS" id="PR01271">
    <property type="entry name" value="HISDACETLASE"/>
</dbReference>
<dbReference type="SUPFAM" id="SSF52768">
    <property type="entry name" value="Arginase/deacetylase"/>
    <property type="match status" value="1"/>
</dbReference>
<reference key="1">
    <citation type="journal article" date="2005" name="Science">
        <title>The transcriptional landscape of the mammalian genome.</title>
        <authorList>
            <person name="Carninci P."/>
            <person name="Kasukawa T."/>
            <person name="Katayama S."/>
            <person name="Gough J."/>
            <person name="Frith M.C."/>
            <person name="Maeda N."/>
            <person name="Oyama R."/>
            <person name="Ravasi T."/>
            <person name="Lenhard B."/>
            <person name="Wells C."/>
            <person name="Kodzius R."/>
            <person name="Shimokawa K."/>
            <person name="Bajic V.B."/>
            <person name="Brenner S.E."/>
            <person name="Batalov S."/>
            <person name="Forrest A.R."/>
            <person name="Zavolan M."/>
            <person name="Davis M.J."/>
            <person name="Wilming L.G."/>
            <person name="Aidinis V."/>
            <person name="Allen J.E."/>
            <person name="Ambesi-Impiombato A."/>
            <person name="Apweiler R."/>
            <person name="Aturaliya R.N."/>
            <person name="Bailey T.L."/>
            <person name="Bansal M."/>
            <person name="Baxter L."/>
            <person name="Beisel K.W."/>
            <person name="Bersano T."/>
            <person name="Bono H."/>
            <person name="Chalk A.M."/>
            <person name="Chiu K.P."/>
            <person name="Choudhary V."/>
            <person name="Christoffels A."/>
            <person name="Clutterbuck D.R."/>
            <person name="Crowe M.L."/>
            <person name="Dalla E."/>
            <person name="Dalrymple B.P."/>
            <person name="de Bono B."/>
            <person name="Della Gatta G."/>
            <person name="di Bernardo D."/>
            <person name="Down T."/>
            <person name="Engstrom P."/>
            <person name="Fagiolini M."/>
            <person name="Faulkner G."/>
            <person name="Fletcher C.F."/>
            <person name="Fukushima T."/>
            <person name="Furuno M."/>
            <person name="Futaki S."/>
            <person name="Gariboldi M."/>
            <person name="Georgii-Hemming P."/>
            <person name="Gingeras T.R."/>
            <person name="Gojobori T."/>
            <person name="Green R.E."/>
            <person name="Gustincich S."/>
            <person name="Harbers M."/>
            <person name="Hayashi Y."/>
            <person name="Hensch T.K."/>
            <person name="Hirokawa N."/>
            <person name="Hill D."/>
            <person name="Huminiecki L."/>
            <person name="Iacono M."/>
            <person name="Ikeo K."/>
            <person name="Iwama A."/>
            <person name="Ishikawa T."/>
            <person name="Jakt M."/>
            <person name="Kanapin A."/>
            <person name="Katoh M."/>
            <person name="Kawasawa Y."/>
            <person name="Kelso J."/>
            <person name="Kitamura H."/>
            <person name="Kitano H."/>
            <person name="Kollias G."/>
            <person name="Krishnan S.P."/>
            <person name="Kruger A."/>
            <person name="Kummerfeld S.K."/>
            <person name="Kurochkin I.V."/>
            <person name="Lareau L.F."/>
            <person name="Lazarevic D."/>
            <person name="Lipovich L."/>
            <person name="Liu J."/>
            <person name="Liuni S."/>
            <person name="McWilliam S."/>
            <person name="Madan Babu M."/>
            <person name="Madera M."/>
            <person name="Marchionni L."/>
            <person name="Matsuda H."/>
            <person name="Matsuzawa S."/>
            <person name="Miki H."/>
            <person name="Mignone F."/>
            <person name="Miyake S."/>
            <person name="Morris K."/>
            <person name="Mottagui-Tabar S."/>
            <person name="Mulder N."/>
            <person name="Nakano N."/>
            <person name="Nakauchi H."/>
            <person name="Ng P."/>
            <person name="Nilsson R."/>
            <person name="Nishiguchi S."/>
            <person name="Nishikawa S."/>
            <person name="Nori F."/>
            <person name="Ohara O."/>
            <person name="Okazaki Y."/>
            <person name="Orlando V."/>
            <person name="Pang K.C."/>
            <person name="Pavan W.J."/>
            <person name="Pavesi G."/>
            <person name="Pesole G."/>
            <person name="Petrovsky N."/>
            <person name="Piazza S."/>
            <person name="Reed J."/>
            <person name="Reid J.F."/>
            <person name="Ring B.Z."/>
            <person name="Ringwald M."/>
            <person name="Rost B."/>
            <person name="Ruan Y."/>
            <person name="Salzberg S.L."/>
            <person name="Sandelin A."/>
            <person name="Schneider C."/>
            <person name="Schoenbach C."/>
            <person name="Sekiguchi K."/>
            <person name="Semple C.A."/>
            <person name="Seno S."/>
            <person name="Sessa L."/>
            <person name="Sheng Y."/>
            <person name="Shibata Y."/>
            <person name="Shimada H."/>
            <person name="Shimada K."/>
            <person name="Silva D."/>
            <person name="Sinclair B."/>
            <person name="Sperling S."/>
            <person name="Stupka E."/>
            <person name="Sugiura K."/>
            <person name="Sultana R."/>
            <person name="Takenaka Y."/>
            <person name="Taki K."/>
            <person name="Tammoja K."/>
            <person name="Tan S.L."/>
            <person name="Tang S."/>
            <person name="Taylor M.S."/>
            <person name="Tegner J."/>
            <person name="Teichmann S.A."/>
            <person name="Ueda H.R."/>
            <person name="van Nimwegen E."/>
            <person name="Verardo R."/>
            <person name="Wei C.L."/>
            <person name="Yagi K."/>
            <person name="Yamanishi H."/>
            <person name="Zabarovsky E."/>
            <person name="Zhu S."/>
            <person name="Zimmer A."/>
            <person name="Hide W."/>
            <person name="Bult C."/>
            <person name="Grimmond S.M."/>
            <person name="Teasdale R.D."/>
            <person name="Liu E.T."/>
            <person name="Brusic V."/>
            <person name="Quackenbush J."/>
            <person name="Wahlestedt C."/>
            <person name="Mattick J.S."/>
            <person name="Hume D.A."/>
            <person name="Kai C."/>
            <person name="Sasaki D."/>
            <person name="Tomaru Y."/>
            <person name="Fukuda S."/>
            <person name="Kanamori-Katayama M."/>
            <person name="Suzuki M."/>
            <person name="Aoki J."/>
            <person name="Arakawa T."/>
            <person name="Iida J."/>
            <person name="Imamura K."/>
            <person name="Itoh M."/>
            <person name="Kato T."/>
            <person name="Kawaji H."/>
            <person name="Kawagashira N."/>
            <person name="Kawashima T."/>
            <person name="Kojima M."/>
            <person name="Kondo S."/>
            <person name="Konno H."/>
            <person name="Nakano K."/>
            <person name="Ninomiya N."/>
            <person name="Nishio T."/>
            <person name="Okada M."/>
            <person name="Plessy C."/>
            <person name="Shibata K."/>
            <person name="Shiraki T."/>
            <person name="Suzuki S."/>
            <person name="Tagami M."/>
            <person name="Waki K."/>
            <person name="Watahiki A."/>
            <person name="Okamura-Oho Y."/>
            <person name="Suzuki H."/>
            <person name="Kawai J."/>
            <person name="Hayashizaki Y."/>
        </authorList>
    </citation>
    <scope>NUCLEOTIDE SEQUENCE [LARGE SCALE MRNA] (ISOFORMS 1 AND 2)</scope>
    <source>
        <strain>C57BL/6J</strain>
        <tissue>Brain</tissue>
        <tissue>Embryo</tissue>
        <tissue>Thymus</tissue>
    </source>
</reference>
<reference key="2">
    <citation type="journal article" date="2004" name="Genome Res.">
        <title>The status, quality, and expansion of the NIH full-length cDNA project: the Mammalian Gene Collection (MGC).</title>
        <authorList>
            <consortium name="The MGC Project Team"/>
        </authorList>
    </citation>
    <scope>NUCLEOTIDE SEQUENCE [LARGE SCALE MRNA] (ISOFORM 1)</scope>
    <source>
        <tissue>Pituitary</tissue>
    </source>
</reference>
<reference key="3">
    <citation type="submission" date="2001-12" db="EMBL/GenBank/DDBJ databases">
        <title>Selective regulation of class I and II histone deacetylase expression in cultured neural cells.</title>
        <authorList>
            <person name="Ajamian F."/>
            <person name="Suuronen T."/>
            <person name="Salminen A."/>
        </authorList>
    </citation>
    <scope>NUCLEOTIDE SEQUENCE [MRNA] OF 58-206</scope>
</reference>
<reference key="4">
    <citation type="submission" date="2007-04" db="UniProtKB">
        <authorList>
            <person name="Lubec G."/>
            <person name="Kang S.U."/>
        </authorList>
    </citation>
    <scope>PROTEIN SEQUENCE OF 195-223</scope>
    <scope>IDENTIFICATION BY MASS SPECTROMETRY</scope>
    <source>
        <strain>C57BL/6J</strain>
        <tissue>Brain</tissue>
    </source>
</reference>
<reference key="5">
    <citation type="journal article" date="2001" name="Mol. Cell. Biol.">
        <title>ETO, a target of t(8;21) in acute leukemia, makes distinct contacts with multiple histone deacetylases and binds mSin3A through its oligomerization domain.</title>
        <authorList>
            <person name="Amann J.M."/>
            <person name="Nip J."/>
            <person name="Strom D.K."/>
            <person name="Lutterbach B."/>
            <person name="Harada H."/>
            <person name="Lenny N."/>
            <person name="Downing J.R."/>
            <person name="Meyers S."/>
            <person name="Hiebert S.W."/>
        </authorList>
    </citation>
    <scope>INTERACTION WITH CBFA2T3</scope>
</reference>
<sequence>MEMPEEPANSGHSLPPVYIYSPEYVSICDSLVKVPKRASMVHSLIEAYALHKQMRIVKPKVASMEEMATFHTDAYLQHLQKVSQEGDEDHPDSIEYGLGYDCPATEGIFDYAAAIGGGTITAAQCLIDGKCKVAINWSGGWHHAKKDEASGFCYLNDAVLGILRLRRKFDRILYVDLDLHHGDGVEDAFSFTSKVMTVSLHKFSPGFFPGTGDMSDVGLGKGRYYSVNVPIQDGIQDEKYYHICESVLKEVYQAFNPKAVVLQLGADTIAGDPMCSFNMTPVGIGKCLKYVLQWQLATLILGGGGYNLANTARCWTYLTGVILGKTLSSEIPDHEFFTAYGPDYVLEITPSCRPDRNEPHRIQQILNYIKGNLKHVV</sequence>
<organism>
    <name type="scientific">Mus musculus</name>
    <name type="common">Mouse</name>
    <dbReference type="NCBI Taxonomy" id="10090"/>
    <lineage>
        <taxon>Eukaryota</taxon>
        <taxon>Metazoa</taxon>
        <taxon>Chordata</taxon>
        <taxon>Craniata</taxon>
        <taxon>Vertebrata</taxon>
        <taxon>Euteleostomi</taxon>
        <taxon>Mammalia</taxon>
        <taxon>Eutheria</taxon>
        <taxon>Euarchontoglires</taxon>
        <taxon>Glires</taxon>
        <taxon>Rodentia</taxon>
        <taxon>Myomorpha</taxon>
        <taxon>Muroidea</taxon>
        <taxon>Muridae</taxon>
        <taxon>Murinae</taxon>
        <taxon>Mus</taxon>
        <taxon>Mus</taxon>
    </lineage>
</organism>